<dbReference type="EC" id="3.4.13.9"/>
<dbReference type="EMBL" id="AF060010">
    <property type="protein sequence ID" value="AAC61259.1"/>
    <property type="molecule type" value="Genomic_DNA"/>
</dbReference>
<dbReference type="EMBL" id="AE009950">
    <property type="protein sequence ID" value="AAL81467.1"/>
    <property type="molecule type" value="Genomic_DNA"/>
</dbReference>
<dbReference type="PIR" id="T46973">
    <property type="entry name" value="T46973"/>
</dbReference>
<dbReference type="RefSeq" id="WP_011012489.1">
    <property type="nucleotide sequence ID" value="NZ_CP023154.1"/>
</dbReference>
<dbReference type="PDB" id="1PV9">
    <property type="method" value="X-ray"/>
    <property type="resolution" value="2.00 A"/>
    <property type="chains" value="A/B=1-348"/>
</dbReference>
<dbReference type="PDBsum" id="1PV9"/>
<dbReference type="SMR" id="P81535"/>
<dbReference type="STRING" id="186497.PF1343"/>
<dbReference type="MEROPS" id="M24.008"/>
<dbReference type="PaxDb" id="186497-PF1343"/>
<dbReference type="GeneID" id="41713146"/>
<dbReference type="KEGG" id="pfu:PF1343"/>
<dbReference type="PATRIC" id="fig|186497.12.peg.1406"/>
<dbReference type="eggNOG" id="arCOG01000">
    <property type="taxonomic scope" value="Archaea"/>
</dbReference>
<dbReference type="HOGENOM" id="CLU_017266_4_2_2"/>
<dbReference type="OrthoDB" id="1346at2157"/>
<dbReference type="PhylomeDB" id="P81535"/>
<dbReference type="BRENDA" id="3.4.13.9">
    <property type="organism ID" value="5243"/>
</dbReference>
<dbReference type="EvolutionaryTrace" id="P81535"/>
<dbReference type="Proteomes" id="UP000001013">
    <property type="component" value="Chromosome"/>
</dbReference>
<dbReference type="GO" id="GO:0005737">
    <property type="term" value="C:cytoplasm"/>
    <property type="evidence" value="ECO:0007669"/>
    <property type="project" value="UniProtKB-SubCell"/>
</dbReference>
<dbReference type="GO" id="GO:0046872">
    <property type="term" value="F:metal ion binding"/>
    <property type="evidence" value="ECO:0007669"/>
    <property type="project" value="UniProtKB-KW"/>
</dbReference>
<dbReference type="GO" id="GO:0008237">
    <property type="term" value="F:metallopeptidase activity"/>
    <property type="evidence" value="ECO:0007669"/>
    <property type="project" value="UniProtKB-KW"/>
</dbReference>
<dbReference type="GO" id="GO:0102009">
    <property type="term" value="F:proline dipeptidase activity"/>
    <property type="evidence" value="ECO:0007669"/>
    <property type="project" value="UniProtKB-EC"/>
</dbReference>
<dbReference type="GO" id="GO:0006508">
    <property type="term" value="P:proteolysis"/>
    <property type="evidence" value="ECO:0007669"/>
    <property type="project" value="UniProtKB-KW"/>
</dbReference>
<dbReference type="CDD" id="cd01092">
    <property type="entry name" value="APP-like"/>
    <property type="match status" value="1"/>
</dbReference>
<dbReference type="FunFam" id="3.90.230.10:FF:000014">
    <property type="entry name" value="Aminopeptidase P family protein"/>
    <property type="match status" value="1"/>
</dbReference>
<dbReference type="Gene3D" id="3.90.230.10">
    <property type="entry name" value="Creatinase/methionine aminopeptidase superfamily"/>
    <property type="match status" value="1"/>
</dbReference>
<dbReference type="Gene3D" id="3.40.350.10">
    <property type="entry name" value="Creatinase/prolidase N-terminal domain"/>
    <property type="match status" value="1"/>
</dbReference>
<dbReference type="InterPro" id="IPR029149">
    <property type="entry name" value="Creatin/AminoP/Spt16_N"/>
</dbReference>
<dbReference type="InterPro" id="IPR036005">
    <property type="entry name" value="Creatinase/aminopeptidase-like"/>
</dbReference>
<dbReference type="InterPro" id="IPR000587">
    <property type="entry name" value="Creatinase_N"/>
</dbReference>
<dbReference type="InterPro" id="IPR000994">
    <property type="entry name" value="Pept_M24"/>
</dbReference>
<dbReference type="InterPro" id="IPR001714">
    <property type="entry name" value="Pept_M24_MAP"/>
</dbReference>
<dbReference type="InterPro" id="IPR050659">
    <property type="entry name" value="Peptidase_M24B"/>
</dbReference>
<dbReference type="InterPro" id="IPR001131">
    <property type="entry name" value="Peptidase_M24B_aminopep-P_CS"/>
</dbReference>
<dbReference type="InterPro" id="IPR053500">
    <property type="entry name" value="Prolidase_arc"/>
</dbReference>
<dbReference type="NCBIfam" id="NF040821">
    <property type="entry name" value="dipep_PepQ_Arch"/>
    <property type="match status" value="1"/>
</dbReference>
<dbReference type="PANTHER" id="PTHR46112">
    <property type="entry name" value="AMINOPEPTIDASE"/>
    <property type="match status" value="1"/>
</dbReference>
<dbReference type="PANTHER" id="PTHR46112:SF2">
    <property type="entry name" value="XAA-PRO AMINOPEPTIDASE P-RELATED"/>
    <property type="match status" value="1"/>
</dbReference>
<dbReference type="Pfam" id="PF01321">
    <property type="entry name" value="Creatinase_N"/>
    <property type="match status" value="1"/>
</dbReference>
<dbReference type="Pfam" id="PF00557">
    <property type="entry name" value="Peptidase_M24"/>
    <property type="match status" value="1"/>
</dbReference>
<dbReference type="PRINTS" id="PR00599">
    <property type="entry name" value="MAPEPTIDASE"/>
</dbReference>
<dbReference type="SUPFAM" id="SSF55920">
    <property type="entry name" value="Creatinase/aminopeptidase"/>
    <property type="match status" value="1"/>
</dbReference>
<dbReference type="SUPFAM" id="SSF53092">
    <property type="entry name" value="Creatinase/prolidase N-terminal domain"/>
    <property type="match status" value="1"/>
</dbReference>
<dbReference type="PROSITE" id="PS00491">
    <property type="entry name" value="PROLINE_PEPTIDASE"/>
    <property type="match status" value="1"/>
</dbReference>
<gene>
    <name type="primary">pepQ</name>
    <name type="ordered locus">PF1343</name>
</gene>
<evidence type="ECO:0000269" key="1">
    <source>
    </source>
</evidence>
<evidence type="ECO:0000269" key="2">
    <source>
    </source>
</evidence>
<evidence type="ECO:0000269" key="3">
    <source>
    </source>
</evidence>
<evidence type="ECO:0000305" key="4"/>
<evidence type="ECO:0007829" key="5">
    <source>
        <dbReference type="PDB" id="1PV9"/>
    </source>
</evidence>
<accession>P81535</accession>
<reference key="1">
    <citation type="journal article" date="1998" name="J. Bacteriol.">
        <title>Characterization of native and recombinant forms of an unusual cobalt-dependent proline dipeptidase (Prolidase) from the hyperthermophilic archaeon Pyrococcus furiosus.</title>
        <authorList>
            <person name="Ghosh M."/>
            <person name="Grunden A.M."/>
            <person name="Dunn D.M."/>
            <person name="Weiss R."/>
            <person name="Adams M.W.W."/>
        </authorList>
    </citation>
    <scope>NUCLEOTIDE SEQUENCE [GENOMIC DNA]</scope>
    <scope>PROTEIN SEQUENCE OF 1-15</scope>
    <scope>FUNCTION</scope>
    <scope>COFACTOR</scope>
    <scope>SUBUNIT</scope>
    <scope>BIOPHYSICOCHEMICAL PROPERTIES</scope>
    <source>
        <strain>ATCC 43587 / DSM 3638 / JCM 8422 / Vc1</strain>
    </source>
</reference>
<reference key="2">
    <citation type="journal article" date="1999" name="Genetics">
        <title>Divergence of the hyperthermophilic archaea Pyrococcus furiosus and P. horikoshii inferred from complete genomic sequences.</title>
        <authorList>
            <person name="Maeder D.L."/>
            <person name="Weiss R.B."/>
            <person name="Dunn D.M."/>
            <person name="Cherry J.L."/>
            <person name="Gonzalez J.M."/>
            <person name="DiRuggiero J."/>
            <person name="Robb F.T."/>
        </authorList>
    </citation>
    <scope>NUCLEOTIDE SEQUENCE [LARGE SCALE GENOMIC DNA]</scope>
    <source>
        <strain>ATCC 43587 / DSM 3638 / JCM 8422 / Vc1</strain>
    </source>
</reference>
<reference key="3">
    <citation type="journal article" date="2001" name="Acta Crystallogr. D">
        <title>Crystallization and characterization of the prolidase from Pyrococcus furiosus.</title>
        <authorList>
            <person name="Willingham K."/>
            <person name="Maher M.J."/>
            <person name="Grunden A.M."/>
            <person name="Ghosh M."/>
            <person name="Adams M.W.W."/>
            <person name="Freeman H.C."/>
            <person name="Guss J.M."/>
        </authorList>
    </citation>
    <scope>CRYSTALLIZATION</scope>
    <source>
        <strain>ATCC 43587 / DSM 3638 / JCM 8422 / Vc1</strain>
    </source>
</reference>
<reference key="4">
    <citation type="journal article" date="2001" name="Methods Enzymol.">
        <title>Proline dipeptidase from Pyrococcus furiosus.</title>
        <authorList>
            <person name="Grunden A.M."/>
            <person name="Ghosh M."/>
            <person name="Adams M.W.W."/>
        </authorList>
    </citation>
    <scope>REVIEW</scope>
</reference>
<reference key="5">
    <citation type="journal article" date="2005" name="FEBS Lett.">
        <title>Characterization of the dinuclear metal center of Pyrococcus furiosus prolidase by analysis of targeted mutants.</title>
        <authorList>
            <person name="Du X."/>
            <person name="Tove S."/>
            <person name="Kast-Hutcheson K."/>
            <person name="Grunden A.M."/>
        </authorList>
    </citation>
    <scope>MUTAGENESIS OF ASP-209; HIS-284 AND GLU-327</scope>
</reference>
<reference key="6">
    <citation type="journal article" date="2004" name="Biochemistry">
        <title>Structure of the prolidase from Pyrococcus furiosus.</title>
        <authorList>
            <person name="Maher M.J."/>
            <person name="Ghosh M."/>
            <person name="Grunden A.M."/>
            <person name="Menon A.L."/>
            <person name="Adams M.W.W."/>
            <person name="Freeman H.C."/>
            <person name="Guss J.M."/>
        </authorList>
    </citation>
    <scope>X-RAY CRYSTALLOGRAPHY (2.0 ANGSTROMS) IN COMPLEX WITH ZINC IONS</scope>
</reference>
<keyword id="KW-0002">3D-structure</keyword>
<keyword id="KW-0170">Cobalt</keyword>
<keyword id="KW-0963">Cytoplasm</keyword>
<keyword id="KW-0224">Dipeptidase</keyword>
<keyword id="KW-0903">Direct protein sequencing</keyword>
<keyword id="KW-0378">Hydrolase</keyword>
<keyword id="KW-0479">Metal-binding</keyword>
<keyword id="KW-0482">Metalloprotease</keyword>
<keyword id="KW-0645">Protease</keyword>
<keyword id="KW-1185">Reference proteome</keyword>
<proteinExistence type="evidence at protein level"/>
<feature type="chain" id="PRO_0000185093" description="Xaa-Pro dipeptidase">
    <location>
        <begin position="1"/>
        <end position="348"/>
    </location>
</feature>
<feature type="binding site">
    <location>
        <position position="209"/>
    </location>
    <ligand>
        <name>Co(2+)</name>
        <dbReference type="ChEBI" id="CHEBI:48828"/>
        <label>2</label>
    </ligand>
</feature>
<feature type="binding site">
    <location>
        <position position="220"/>
    </location>
    <ligand>
        <name>Co(2+)</name>
        <dbReference type="ChEBI" id="CHEBI:48828"/>
        <label>1</label>
    </ligand>
</feature>
<feature type="binding site">
    <location>
        <position position="220"/>
    </location>
    <ligand>
        <name>Co(2+)</name>
        <dbReference type="ChEBI" id="CHEBI:48828"/>
        <label>2</label>
    </ligand>
</feature>
<feature type="binding site">
    <location>
        <position position="284"/>
    </location>
    <ligand>
        <name>Co(2+)</name>
        <dbReference type="ChEBI" id="CHEBI:48828"/>
        <label>1</label>
    </ligand>
</feature>
<feature type="binding site">
    <location>
        <position position="313"/>
    </location>
    <ligand>
        <name>Co(2+)</name>
        <dbReference type="ChEBI" id="CHEBI:48828"/>
        <label>1</label>
    </ligand>
</feature>
<feature type="binding site">
    <location>
        <position position="327"/>
    </location>
    <ligand>
        <name>Co(2+)</name>
        <dbReference type="ChEBI" id="CHEBI:48828"/>
        <label>1</label>
    </ligand>
</feature>
<feature type="binding site">
    <location>
        <position position="327"/>
    </location>
    <ligand>
        <name>Co(2+)</name>
        <dbReference type="ChEBI" id="CHEBI:48828"/>
        <label>2</label>
    </ligand>
</feature>
<feature type="mutagenesis site" description="1300-fold reduction in activity." evidence="2">
    <original>D</original>
    <variation>A</variation>
    <location>
        <position position="209"/>
    </location>
</feature>
<feature type="mutagenesis site" description="2000-fold reduction in activity." evidence="2">
    <original>H</original>
    <variation>A</variation>
    <variation>L</variation>
    <location>
        <position position="284"/>
    </location>
</feature>
<feature type="mutagenesis site" description="Loss of activity." evidence="2">
    <original>E</original>
    <variation>L</variation>
    <location>
        <position position="327"/>
    </location>
</feature>
<feature type="helix" evidence="5">
    <location>
        <begin position="9"/>
        <end position="14"/>
    </location>
</feature>
<feature type="strand" evidence="5">
    <location>
        <begin position="19"/>
        <end position="22"/>
    </location>
</feature>
<feature type="helix" evidence="5">
    <location>
        <begin position="25"/>
        <end position="32"/>
    </location>
</feature>
<feature type="strand" evidence="5">
    <location>
        <begin position="41"/>
        <end position="45"/>
    </location>
</feature>
<feature type="strand" evidence="5">
    <location>
        <begin position="48"/>
        <end position="54"/>
    </location>
</feature>
<feature type="helix" evidence="5">
    <location>
        <begin position="55"/>
        <end position="57"/>
    </location>
</feature>
<feature type="helix" evidence="5">
    <location>
        <begin position="58"/>
        <end position="64"/>
    </location>
</feature>
<feature type="strand" evidence="5">
    <location>
        <begin position="69"/>
        <end position="74"/>
    </location>
</feature>
<feature type="helix" evidence="5">
    <location>
        <begin position="77"/>
        <end position="81"/>
    </location>
</feature>
<feature type="turn" evidence="5">
    <location>
        <begin position="82"/>
        <end position="84"/>
    </location>
</feature>
<feature type="strand" evidence="5">
    <location>
        <begin position="86"/>
        <end position="90"/>
    </location>
</feature>
<feature type="helix" evidence="5">
    <location>
        <begin position="96"/>
        <end position="104"/>
    </location>
</feature>
<feature type="strand" evidence="5">
    <location>
        <begin position="110"/>
        <end position="113"/>
    </location>
</feature>
<feature type="helix" evidence="5">
    <location>
        <begin position="115"/>
        <end position="122"/>
    </location>
</feature>
<feature type="helix" evidence="5">
    <location>
        <begin position="127"/>
        <end position="150"/>
    </location>
</feature>
<feature type="helix" evidence="5">
    <location>
        <begin position="157"/>
        <end position="170"/>
    </location>
</feature>
<feature type="strand" evidence="5">
    <location>
        <begin position="174"/>
        <end position="178"/>
    </location>
</feature>
<feature type="strand" evidence="5">
    <location>
        <begin position="181"/>
        <end position="184"/>
    </location>
</feature>
<feature type="helix" evidence="5">
    <location>
        <begin position="185"/>
        <end position="189"/>
    </location>
</feature>
<feature type="strand" evidence="5">
    <location>
        <begin position="205"/>
        <end position="210"/>
    </location>
</feature>
<feature type="strand" evidence="5">
    <location>
        <begin position="212"/>
        <end position="214"/>
    </location>
</feature>
<feature type="strand" evidence="5">
    <location>
        <begin position="221"/>
        <end position="229"/>
    </location>
</feature>
<feature type="helix" evidence="5">
    <location>
        <begin position="232"/>
        <end position="251"/>
    </location>
</feature>
<feature type="helix" evidence="5">
    <location>
        <begin position="258"/>
        <end position="271"/>
    </location>
</feature>
<feature type="helix" evidence="5">
    <location>
        <begin position="275"/>
        <end position="277"/>
    </location>
</feature>
<feature type="strand" evidence="5">
    <location>
        <begin position="282"/>
        <end position="285"/>
    </location>
</feature>
<feature type="strand" evidence="5">
    <location>
        <begin position="287"/>
        <end position="297"/>
    </location>
</feature>
<feature type="strand" evidence="5">
    <location>
        <begin position="309"/>
        <end position="312"/>
    </location>
</feature>
<feature type="strand" evidence="5">
    <location>
        <begin position="315"/>
        <end position="318"/>
    </location>
</feature>
<feature type="turn" evidence="5">
    <location>
        <begin position="319"/>
        <end position="321"/>
    </location>
</feature>
<feature type="strand" evidence="5">
    <location>
        <begin position="322"/>
        <end position="325"/>
    </location>
</feature>
<feature type="strand" evidence="5">
    <location>
        <begin position="327"/>
        <end position="332"/>
    </location>
</feature>
<feature type="strand" evidence="5">
    <location>
        <begin position="334"/>
        <end position="340"/>
    </location>
</feature>
<protein>
    <recommendedName>
        <fullName>Xaa-Pro dipeptidase</fullName>
        <shortName>X-Pro dipeptidase</shortName>
        <ecNumber>3.4.13.9</ecNumber>
    </recommendedName>
    <alternativeName>
        <fullName>Imidodipeptidase</fullName>
    </alternativeName>
    <alternativeName>
        <fullName>Proline dipeptidase</fullName>
        <shortName>Prolidase</shortName>
    </alternativeName>
</protein>
<comment type="function">
    <text evidence="3">Splits dipeptides with a prolyl in the C-terminal position and a nonpolar amino acid at the N-terminal position.</text>
</comment>
<comment type="catalytic activity">
    <reaction>
        <text>Xaa-L-Pro dipeptide + H2O = an L-alpha-amino acid + L-proline</text>
        <dbReference type="Rhea" id="RHEA:76407"/>
        <dbReference type="ChEBI" id="CHEBI:15377"/>
        <dbReference type="ChEBI" id="CHEBI:59869"/>
        <dbReference type="ChEBI" id="CHEBI:60039"/>
        <dbReference type="ChEBI" id="CHEBI:195196"/>
        <dbReference type="EC" id="3.4.13.9"/>
    </reaction>
</comment>
<comment type="cofactor">
    <cofactor evidence="3">
        <name>Co(2+)</name>
        <dbReference type="ChEBI" id="CHEBI:48828"/>
    </cofactor>
    <cofactor evidence="3">
        <name>Mn(2+)</name>
        <dbReference type="ChEBI" id="CHEBI:29035"/>
    </cofactor>
    <text evidence="3">Binds 2 cobalt ions per subunit. Co(2+) can be replaced by Mn(2+), resulting in a 25% decrease in activity, but not by Mg(2+), Ca(2+), Fe(2+), Zn(2+), Cu(2+), or Ni(2+).</text>
</comment>
<comment type="biophysicochemical properties">
    <kinetics>
        <KM evidence="3">2.8 mM for Met-Pro</KM>
        <KM evidence="3">3 mM for Leu-Pro</KM>
        <KM evidence="3">4.2 mM for Val-Pro</KM>
        <KM evidence="3">8.3 mM for Ala-Pro</KM>
        <KM evidence="3">20 mM for Phe-Pro</KM>
        <Vmax evidence="3">645.0 umol/min/mg enzyme with Met-Pro as substrate</Vmax>
        <Vmax evidence="3">645.0 umol/min/mg enzyme with Leu-Pro as substrate</Vmax>
        <Vmax evidence="3">175.0 umol/min/mg enzyme with Val-Pro as substrate</Vmax>
        <Vmax evidence="3">250.0 umol/min/mg enzyme with Ala-Pro as substrate</Vmax>
        <Vmax evidence="3">1000.0 umol/min/mg enzyme with Phe-Pro as substrate</Vmax>
    </kinetics>
    <phDependence>
        <text evidence="3">Optimum pH is 7.0.</text>
    </phDependence>
    <temperatureDependence>
        <text evidence="3">Optimum temperature is 100 degrees Celsius. Highly thermostable.</text>
    </temperatureDependence>
</comment>
<comment type="subunit">
    <text evidence="1 3">Homodimer.</text>
</comment>
<comment type="subcellular location">
    <subcellularLocation>
        <location>Cytoplasm</location>
    </subcellularLocation>
</comment>
<comment type="miscellaneous">
    <text>Cobalt 1 is the tight-binding and cobalt 2 is the loose-binding metal center.</text>
</comment>
<comment type="similarity">
    <text evidence="4">Belongs to the peptidase M24B family. Archaeal-type prolidase subfamily.</text>
</comment>
<organism>
    <name type="scientific">Pyrococcus furiosus (strain ATCC 43587 / DSM 3638 / JCM 8422 / Vc1)</name>
    <dbReference type="NCBI Taxonomy" id="186497"/>
    <lineage>
        <taxon>Archaea</taxon>
        <taxon>Methanobacteriati</taxon>
        <taxon>Methanobacteriota</taxon>
        <taxon>Thermococci</taxon>
        <taxon>Thermococcales</taxon>
        <taxon>Thermococcaceae</taxon>
        <taxon>Pyrococcus</taxon>
    </lineage>
</organism>
<name>PEPQ_PYRFU</name>
<sequence>MKERLEKLVKFMDENSIDRVFIAKPVNVYYFSGTSPLGGGYIIVDGDEATLYVPELEYEMAKEESKLPVVKFKKFDEIYEILKNTETLGIEGTLSYSMVENFKEKSNVKEFKKIDDVIKDLRIIKTKEEIEIIEKACEIADKAVMAAIEEITEGKREREVAAKVEYLMKMNGAEKPAFDTIIASGHRSALPHGVASDKRIERGDLVVIDLGALYNHYNSDITRTIVVGSPNEKQREIYEIVLEAQKRAVEAAKPGMTAKELDSIAREIIKEYGYGDYFIHSLGHGVGLEIHEWPRISQYDETVLKEGMVITIEPGIYIPKLGGVRIEDTVLITENGAKRLTKTERELL</sequence>